<organism>
    <name type="scientific">Aneura mirabilis</name>
    <name type="common">Parasitic liverwort</name>
    <name type="synonym">Cryptothallus mirabilis</name>
    <dbReference type="NCBI Taxonomy" id="280810"/>
    <lineage>
        <taxon>Eukaryota</taxon>
        <taxon>Viridiplantae</taxon>
        <taxon>Streptophyta</taxon>
        <taxon>Embryophyta</taxon>
        <taxon>Marchantiophyta</taxon>
        <taxon>Jungermanniopsida</taxon>
        <taxon>Metzgeriidae</taxon>
        <taxon>Metzgeriales</taxon>
        <taxon>Aneuraceae</taxon>
        <taxon>Aneura</taxon>
    </lineage>
</organism>
<sequence>MTQPNPNKQSVELNRTSLYWGLLLIFVLAVSFSNYFFN</sequence>
<geneLocation type="non-photosynthetic plastid"/>
<gene>
    <name evidence="1" type="primary">psbL</name>
</gene>
<comment type="function">
    <text evidence="1">One of the components of the core complex of photosystem II (PSII). PSII is a light-driven water:plastoquinone oxidoreductase that uses light energy to abstract electrons from H(2)O, generating O(2) and a proton gradient subsequently used for ATP formation. It consists of a core antenna complex that captures photons, and an electron transfer chain that converts photonic excitation into a charge separation. This subunit is found at the monomer-monomer interface and is required for correct PSII assembly and/or dimerization.</text>
</comment>
<comment type="subunit">
    <text evidence="1">PSII is composed of 1 copy each of membrane proteins PsbA, PsbB, PsbC, PsbD, PsbE, PsbF, PsbH, PsbI, PsbJ, PsbK, PsbL, PsbM, PsbT, PsbX, PsbY, PsbZ, Psb30/Ycf12, at least 3 peripheral proteins of the oxygen-evolving complex and a large number of cofactors. It forms dimeric complexes.</text>
</comment>
<comment type="subcellular location">
    <subcellularLocation>
        <location evidence="1">Plastid membrane</location>
        <topology evidence="1">Single-pass membrane protein</topology>
    </subcellularLocation>
</comment>
<comment type="similarity">
    <text evidence="1">Belongs to the PsbL family.</text>
</comment>
<comment type="caution">
    <text evidence="2">This organism being non-photosynthetic, the role of this protein is uncertain.</text>
</comment>
<proteinExistence type="inferred from homology"/>
<keyword id="KW-0472">Membrane</keyword>
<keyword id="KW-0602">Photosynthesis</keyword>
<keyword id="KW-0604">Photosystem II</keyword>
<keyword id="KW-0934">Plastid</keyword>
<keyword id="KW-0674">Reaction center</keyword>
<keyword id="KW-0812">Transmembrane</keyword>
<keyword id="KW-1133">Transmembrane helix</keyword>
<reference key="1">
    <citation type="journal article" date="2008" name="Mol. Biol. Evol.">
        <title>Functional gene losses occur with minimal size reduction in the plastid genome of the parasitic liverwort Aneura mirabilis.</title>
        <authorList>
            <person name="Wickett N.J."/>
            <person name="Zhang Y."/>
            <person name="Hansen S.K."/>
            <person name="Roper J.M."/>
            <person name="Kuehl J.V."/>
            <person name="Plock S.A."/>
            <person name="Wolf P.G."/>
            <person name="dePamphilis C.W."/>
            <person name="Boore J.L."/>
            <person name="Goffinet B."/>
        </authorList>
    </citation>
    <scope>NUCLEOTIDE SEQUENCE [LARGE SCALE GENOMIC DNA]</scope>
</reference>
<evidence type="ECO:0000255" key="1">
    <source>
        <dbReference type="HAMAP-Rule" id="MF_01317"/>
    </source>
</evidence>
<evidence type="ECO:0000305" key="2"/>
<name>PSBL_ANEMR</name>
<accession>B0YPP4</accession>
<dbReference type="EMBL" id="EU043314">
    <property type="protein sequence ID" value="ABS54491.1"/>
    <property type="molecule type" value="Genomic_DNA"/>
</dbReference>
<dbReference type="RefSeq" id="YP_001687230.1">
    <property type="nucleotide sequence ID" value="NC_010359.1"/>
</dbReference>
<dbReference type="SMR" id="B0YPP4"/>
<dbReference type="GeneID" id="5952216"/>
<dbReference type="GO" id="GO:0009539">
    <property type="term" value="C:photosystem II reaction center"/>
    <property type="evidence" value="ECO:0007669"/>
    <property type="project" value="InterPro"/>
</dbReference>
<dbReference type="GO" id="GO:0042170">
    <property type="term" value="C:plastid membrane"/>
    <property type="evidence" value="ECO:0007669"/>
    <property type="project" value="UniProtKB-SubCell"/>
</dbReference>
<dbReference type="GO" id="GO:0042651">
    <property type="term" value="C:thylakoid membrane"/>
    <property type="evidence" value="ECO:0007669"/>
    <property type="project" value="UniProtKB-UniRule"/>
</dbReference>
<dbReference type="HAMAP" id="MF_01317">
    <property type="entry name" value="PSII_PsbL"/>
    <property type="match status" value="1"/>
</dbReference>
<dbReference type="InterPro" id="IPR003372">
    <property type="entry name" value="PSII_PsbL"/>
</dbReference>
<dbReference type="InterPro" id="IPR037266">
    <property type="entry name" value="PSII_PsbL_sf"/>
</dbReference>
<dbReference type="NCBIfam" id="NF001972">
    <property type="entry name" value="PRK00753.1"/>
    <property type="match status" value="1"/>
</dbReference>
<dbReference type="Pfam" id="PF02419">
    <property type="entry name" value="PsbL"/>
    <property type="match status" value="1"/>
</dbReference>
<dbReference type="SUPFAM" id="SSF161017">
    <property type="entry name" value="Photosystem II reaction center protein L, PsbL"/>
    <property type="match status" value="1"/>
</dbReference>
<feature type="chain" id="PRO_0000353250" description="Photosystem II reaction center protein L">
    <location>
        <begin position="1"/>
        <end position="38"/>
    </location>
</feature>
<feature type="transmembrane region" description="Helical" evidence="1">
    <location>
        <begin position="17"/>
        <end position="37"/>
    </location>
</feature>
<protein>
    <recommendedName>
        <fullName evidence="1">Photosystem II reaction center protein L</fullName>
        <shortName evidence="1">PSII-L</shortName>
    </recommendedName>
</protein>